<keyword id="KW-0002">3D-structure</keyword>
<keyword id="KW-0007">Acetylation</keyword>
<keyword id="KW-0025">Alternative splicing</keyword>
<keyword id="KW-0143">Chaperone</keyword>
<keyword id="KW-0963">Cytoplasm</keyword>
<keyword id="KW-0903">Direct protein sequencing</keyword>
<keyword id="KW-0275">Fatty acid biosynthesis</keyword>
<keyword id="KW-0276">Fatty acid metabolism</keyword>
<keyword id="KW-0413">Isomerase</keyword>
<keyword id="KW-1017">Isopeptide bond</keyword>
<keyword id="KW-0444">Lipid biosynthesis</keyword>
<keyword id="KW-0443">Lipid metabolism</keyword>
<keyword id="KW-0597">Phosphoprotein</keyword>
<keyword id="KW-0643">Prostaglandin biosynthesis</keyword>
<keyword id="KW-0644">Prostaglandin metabolism</keyword>
<keyword id="KW-1267">Proteomics identification</keyword>
<keyword id="KW-1185">Reference proteome</keyword>
<keyword id="KW-0832">Ubl conjugation</keyword>
<protein>
    <recommendedName>
        <fullName>Prostaglandin E synthase 3</fullName>
        <ecNumber evidence="5">5.3.99.3</ecNumber>
    </recommendedName>
    <alternativeName>
        <fullName>Cytosolic prostaglandin E2 synthase</fullName>
        <shortName>cPGES</shortName>
    </alternativeName>
    <alternativeName>
        <fullName>Hsp90 co-chaperone</fullName>
    </alternativeName>
    <alternativeName>
        <fullName>Progesterone receptor complex p23</fullName>
    </alternativeName>
    <alternativeName>
        <fullName>Telomerase-binding protein p23</fullName>
    </alternativeName>
</protein>
<evidence type="ECO:0000250" key="1">
    <source>
        <dbReference type="UniProtKB" id="Q3ZBF7"/>
    </source>
</evidence>
<evidence type="ECO:0000250" key="2">
    <source>
        <dbReference type="UniProtKB" id="Q9R0Q7"/>
    </source>
</evidence>
<evidence type="ECO:0000255" key="3">
    <source>
        <dbReference type="PROSITE-ProRule" id="PRU00547"/>
    </source>
</evidence>
<evidence type="ECO:0000256" key="4">
    <source>
        <dbReference type="SAM" id="MobiDB-lite"/>
    </source>
</evidence>
<evidence type="ECO:0000269" key="5">
    <source>
    </source>
</evidence>
<evidence type="ECO:0000269" key="6">
    <source>
    </source>
</evidence>
<evidence type="ECO:0000269" key="7">
    <source>
    </source>
</evidence>
<evidence type="ECO:0000269" key="8">
    <source>
    </source>
</evidence>
<evidence type="ECO:0000269" key="9">
    <source>
    </source>
</evidence>
<evidence type="ECO:0000269" key="10">
    <source>
    </source>
</evidence>
<evidence type="ECO:0000269" key="11">
    <source>
    </source>
</evidence>
<evidence type="ECO:0000269" key="12">
    <source>
    </source>
</evidence>
<evidence type="ECO:0000269" key="13">
    <source ref="6"/>
</evidence>
<evidence type="ECO:0000303" key="14">
    <source>
    </source>
</evidence>
<evidence type="ECO:0000303" key="15">
    <source>
    </source>
</evidence>
<evidence type="ECO:0000305" key="16"/>
<evidence type="ECO:0007744" key="17">
    <source>
    </source>
</evidence>
<evidence type="ECO:0007744" key="18">
    <source>
    </source>
</evidence>
<evidence type="ECO:0007744" key="19">
    <source>
    </source>
</evidence>
<evidence type="ECO:0007744" key="20">
    <source>
    </source>
</evidence>
<evidence type="ECO:0007744" key="21">
    <source>
    </source>
</evidence>
<evidence type="ECO:0007744" key="22">
    <source>
    </source>
</evidence>
<evidence type="ECO:0007744" key="23">
    <source>
    </source>
</evidence>
<evidence type="ECO:0007744" key="24">
    <source>
    </source>
</evidence>
<evidence type="ECO:0007744" key="25">
    <source>
    </source>
</evidence>
<evidence type="ECO:0007744" key="26">
    <source>
    </source>
</evidence>
<evidence type="ECO:0007744" key="27">
    <source>
    </source>
</evidence>
<evidence type="ECO:0007744" key="28">
    <source>
    </source>
</evidence>
<evidence type="ECO:0007744" key="29">
    <source>
    </source>
</evidence>
<evidence type="ECO:0007744" key="30">
    <source>
    </source>
</evidence>
<evidence type="ECO:0007744" key="31">
    <source>
    </source>
</evidence>
<evidence type="ECO:0007744" key="32">
    <source>
    </source>
</evidence>
<evidence type="ECO:0007829" key="33">
    <source>
        <dbReference type="PDB" id="1EJF"/>
    </source>
</evidence>
<evidence type="ECO:0007829" key="34">
    <source>
        <dbReference type="PDB" id="7KRJ"/>
    </source>
</evidence>
<name>TEBP_HUMAN</name>
<organism>
    <name type="scientific">Homo sapiens</name>
    <name type="common">Human</name>
    <dbReference type="NCBI Taxonomy" id="9606"/>
    <lineage>
        <taxon>Eukaryota</taxon>
        <taxon>Metazoa</taxon>
        <taxon>Chordata</taxon>
        <taxon>Craniata</taxon>
        <taxon>Vertebrata</taxon>
        <taxon>Euteleostomi</taxon>
        <taxon>Mammalia</taxon>
        <taxon>Eutheria</taxon>
        <taxon>Euarchontoglires</taxon>
        <taxon>Primates</taxon>
        <taxon>Haplorrhini</taxon>
        <taxon>Catarrhini</taxon>
        <taxon>Hominidae</taxon>
        <taxon>Homo</taxon>
    </lineage>
</organism>
<gene>
    <name type="primary">PTGES3</name>
    <name type="synonym">P23</name>
    <name type="synonym">TEBP</name>
</gene>
<comment type="function">
    <text evidence="5 6 7 9">Cytosolic prostaglandin synthase that catalyzes the oxidoreduction of prostaglandin endoperoxide H2 (PGH2) to prostaglandin E2 (PGE2) (PubMed:10922363). Molecular chaperone that localizes to genomic response elements in a hormone-dependent manner and disrupts receptor-mediated transcriptional activation, by promoting disassembly of transcriptional regulatory complexes (PubMed:11274138, PubMed:12077419). Facilitates HIF alpha proteins hydroxylation via interaction with EGLN1/PHD2, leading to recruit EGLN1/PHD2 to the HSP90 pathway (PubMed:24711448).</text>
</comment>
<comment type="catalytic activity">
    <reaction evidence="5">
        <text>prostaglandin H2 = prostaglandin E2</text>
        <dbReference type="Rhea" id="RHEA:12893"/>
        <dbReference type="ChEBI" id="CHEBI:57405"/>
        <dbReference type="ChEBI" id="CHEBI:606564"/>
        <dbReference type="EC" id="5.3.99.3"/>
    </reaction>
</comment>
<comment type="biophysicochemical properties">
    <kinetics>
        <KM evidence="5">14 uM for PGH2</KM>
        <Vmax evidence="5">190.0 nmol/min/mg enzyme toward PGH2</Vmax>
    </kinetics>
</comment>
<comment type="pathway">
    <text evidence="5">Lipid metabolism; prostaglandin biosynthesis.</text>
</comment>
<comment type="subunit">
    <text evidence="6 9 10 12">Probably forms a complex composed of chaperones HSP90 and HSP70, co-chaperones STIP1/HOP, CDC37, PPP5C, PTGES3/p23, TSC1 and client protein TSC2 (PubMed:29127155). Binds to the progesterone receptor (PubMed:8114727). Interacts with TERT; the interaction, together with HSP90AA1, is required for correct assembly and stabilization of the telomerase holoenzyme complex (PubMed:11274138). Interacts (via PXLE motif) with EGLN1/PHD2, recruiting EGLN1/PHD2 to the HSP90 pathway to facilitate HIF alpha proteins hydroxylation (PubMed:24711448). Interacts with HSP90AA1, FLCN, FNIP1 and FNIP2 (PubMed:27353360).</text>
</comment>
<comment type="interaction">
    <interactant intactId="EBI-1049387">
        <id>Q15185</id>
    </interactant>
    <interactant intactId="EBI-528269">
        <id>Q9UKV8</id>
        <label>AGO2</label>
    </interactant>
    <organismsDiffer>false</organismsDiffer>
    <experiments>3</experiments>
</comment>
<comment type="interaction">
    <interactant intactId="EBI-1049387">
        <id>Q15185</id>
    </interactant>
    <interactant intactId="EBI-296047">
        <id>P07900</id>
        <label>HSP90AA1</label>
    </interactant>
    <organismsDiffer>false</organismsDiffer>
    <experiments>9</experiments>
</comment>
<comment type="interaction">
    <interactant intactId="EBI-1049387">
        <id>Q15185</id>
    </interactant>
    <interactant intactId="EBI-352572">
        <id>P08238</id>
        <label>HSP90AB1</label>
    </interactant>
    <organismsDiffer>false</organismsDiffer>
    <experiments>7</experiments>
</comment>
<comment type="interaction">
    <interactant intactId="EBI-1049387">
        <id>Q15185</id>
    </interactant>
    <interactant intactId="EBI-356594">
        <id>O14654</id>
        <label>IRS4</label>
    </interactant>
    <organismsDiffer>false</organismsDiffer>
    <experiments>2</experiments>
</comment>
<comment type="interaction">
    <interactant intactId="EBI-1049387">
        <id>Q15185</id>
    </interactant>
    <interactant intactId="EBI-2515113">
        <id>O14802</id>
        <label>POLR3A</label>
    </interactant>
    <organismsDiffer>false</organismsDiffer>
    <experiments>3</experiments>
</comment>
<comment type="interaction">
    <interactant intactId="EBI-1049387">
        <id>Q15185</id>
    </interactant>
    <interactant intactId="EBI-6427100">
        <id>Q14190</id>
        <label>SIM2</label>
    </interactant>
    <organismsDiffer>false</organismsDiffer>
    <experiments>2</experiments>
</comment>
<comment type="interaction">
    <interactant intactId="EBI-1049387">
        <id>Q15185</id>
    </interactant>
    <interactant intactId="EBI-357067">
        <id>O94763</id>
        <label>URI1</label>
    </interactant>
    <organismsDiffer>false</organismsDiffer>
    <experiments>3</experiments>
</comment>
<comment type="subcellular location">
    <subcellularLocation>
        <location evidence="1">Cytoplasm</location>
    </subcellularLocation>
</comment>
<comment type="alternative products">
    <event type="alternative splicing"/>
    <isoform>
        <id>Q15185-1</id>
        <name>1</name>
        <sequence type="displayed"/>
    </isoform>
    <isoform>
        <id>Q15185-2</id>
        <name>2</name>
        <sequence type="described" ref="VSP_055363"/>
    </isoform>
    <isoform>
        <id>Q15185-3</id>
        <name>3</name>
        <sequence type="described" ref="VSP_055364"/>
    </isoform>
    <isoform>
        <id>Q15185-4</id>
        <name>4</name>
        <sequence type="described" ref="VSP_055365"/>
    </isoform>
</comment>
<comment type="domain">
    <text evidence="9">The PXLE motif mediates interaction with EGLN1/PHD2.</text>
</comment>
<comment type="PTM">
    <text evidence="8 11">Proteolytically cleaved by caspase-7 (CASP7) in response to apoptosis, leading to its inactivation.</text>
</comment>
<comment type="similarity">
    <text evidence="16">Belongs to the p23/wos2 family.</text>
</comment>
<proteinExistence type="evidence at protein level"/>
<accession>Q15185</accession>
<accession>A8K7D0</accession>
<accession>B4DHP2</accession>
<accession>B4DP11</accession>
<accession>B4DP21</accession>
<accession>Q8WU70</accession>
<reference key="1">
    <citation type="journal article" date="1994" name="Mol. Cell. Biol.">
        <title>Characterization of a novel 23-kilodalton protein of unactive progesterone receptor complexes.</title>
        <authorList>
            <person name="Johnson J.L."/>
            <person name="Beito T.G."/>
            <person name="Krco C.J."/>
            <person name="Toft D.O."/>
        </authorList>
    </citation>
    <scope>NUCLEOTIDE SEQUENCE [MRNA] (ISOFORM 1)</scope>
    <scope>PROGESTERONE RECEPTOR-BINDING</scope>
    <source>
        <tissue>Testis</tissue>
    </source>
</reference>
<reference key="2">
    <citation type="journal article" date="2004" name="Nat. Genet.">
        <title>Complete sequencing and characterization of 21,243 full-length human cDNAs.</title>
        <authorList>
            <person name="Ota T."/>
            <person name="Suzuki Y."/>
            <person name="Nishikawa T."/>
            <person name="Otsuki T."/>
            <person name="Sugiyama T."/>
            <person name="Irie R."/>
            <person name="Wakamatsu A."/>
            <person name="Hayashi K."/>
            <person name="Sato H."/>
            <person name="Nagai K."/>
            <person name="Kimura K."/>
            <person name="Makita H."/>
            <person name="Sekine M."/>
            <person name="Obayashi M."/>
            <person name="Nishi T."/>
            <person name="Shibahara T."/>
            <person name="Tanaka T."/>
            <person name="Ishii S."/>
            <person name="Yamamoto J."/>
            <person name="Saito K."/>
            <person name="Kawai Y."/>
            <person name="Isono Y."/>
            <person name="Nakamura Y."/>
            <person name="Nagahari K."/>
            <person name="Murakami K."/>
            <person name="Yasuda T."/>
            <person name="Iwayanagi T."/>
            <person name="Wagatsuma M."/>
            <person name="Shiratori A."/>
            <person name="Sudo H."/>
            <person name="Hosoiri T."/>
            <person name="Kaku Y."/>
            <person name="Kodaira H."/>
            <person name="Kondo H."/>
            <person name="Sugawara M."/>
            <person name="Takahashi M."/>
            <person name="Kanda K."/>
            <person name="Yokoi T."/>
            <person name="Furuya T."/>
            <person name="Kikkawa E."/>
            <person name="Omura Y."/>
            <person name="Abe K."/>
            <person name="Kamihara K."/>
            <person name="Katsuta N."/>
            <person name="Sato K."/>
            <person name="Tanikawa M."/>
            <person name="Yamazaki M."/>
            <person name="Ninomiya K."/>
            <person name="Ishibashi T."/>
            <person name="Yamashita H."/>
            <person name="Murakawa K."/>
            <person name="Fujimori K."/>
            <person name="Tanai H."/>
            <person name="Kimata M."/>
            <person name="Watanabe M."/>
            <person name="Hiraoka S."/>
            <person name="Chiba Y."/>
            <person name="Ishida S."/>
            <person name="Ono Y."/>
            <person name="Takiguchi S."/>
            <person name="Watanabe S."/>
            <person name="Yosida M."/>
            <person name="Hotuta T."/>
            <person name="Kusano J."/>
            <person name="Kanehori K."/>
            <person name="Takahashi-Fujii A."/>
            <person name="Hara H."/>
            <person name="Tanase T.-O."/>
            <person name="Nomura Y."/>
            <person name="Togiya S."/>
            <person name="Komai F."/>
            <person name="Hara R."/>
            <person name="Takeuchi K."/>
            <person name="Arita M."/>
            <person name="Imose N."/>
            <person name="Musashino K."/>
            <person name="Yuuki H."/>
            <person name="Oshima A."/>
            <person name="Sasaki N."/>
            <person name="Aotsuka S."/>
            <person name="Yoshikawa Y."/>
            <person name="Matsunawa H."/>
            <person name="Ichihara T."/>
            <person name="Shiohata N."/>
            <person name="Sano S."/>
            <person name="Moriya S."/>
            <person name="Momiyama H."/>
            <person name="Satoh N."/>
            <person name="Takami S."/>
            <person name="Terashima Y."/>
            <person name="Suzuki O."/>
            <person name="Nakagawa S."/>
            <person name="Senoh A."/>
            <person name="Mizoguchi H."/>
            <person name="Goto Y."/>
            <person name="Shimizu F."/>
            <person name="Wakebe H."/>
            <person name="Hishigaki H."/>
            <person name="Watanabe T."/>
            <person name="Sugiyama A."/>
            <person name="Takemoto M."/>
            <person name="Kawakami B."/>
            <person name="Yamazaki M."/>
            <person name="Watanabe K."/>
            <person name="Kumagai A."/>
            <person name="Itakura S."/>
            <person name="Fukuzumi Y."/>
            <person name="Fujimori Y."/>
            <person name="Komiyama M."/>
            <person name="Tashiro H."/>
            <person name="Tanigami A."/>
            <person name="Fujiwara T."/>
            <person name="Ono T."/>
            <person name="Yamada K."/>
            <person name="Fujii Y."/>
            <person name="Ozaki K."/>
            <person name="Hirao M."/>
            <person name="Ohmori Y."/>
            <person name="Kawabata A."/>
            <person name="Hikiji T."/>
            <person name="Kobatake N."/>
            <person name="Inagaki H."/>
            <person name="Ikema Y."/>
            <person name="Okamoto S."/>
            <person name="Okitani R."/>
            <person name="Kawakami T."/>
            <person name="Noguchi S."/>
            <person name="Itoh T."/>
            <person name="Shigeta K."/>
            <person name="Senba T."/>
            <person name="Matsumura K."/>
            <person name="Nakajima Y."/>
            <person name="Mizuno T."/>
            <person name="Morinaga M."/>
            <person name="Sasaki M."/>
            <person name="Togashi T."/>
            <person name="Oyama M."/>
            <person name="Hata H."/>
            <person name="Watanabe M."/>
            <person name="Komatsu T."/>
            <person name="Mizushima-Sugano J."/>
            <person name="Satoh T."/>
            <person name="Shirai Y."/>
            <person name="Takahashi Y."/>
            <person name="Nakagawa K."/>
            <person name="Okumura K."/>
            <person name="Nagase T."/>
            <person name="Nomura N."/>
            <person name="Kikuchi H."/>
            <person name="Masuho Y."/>
            <person name="Yamashita R."/>
            <person name="Nakai K."/>
            <person name="Yada T."/>
            <person name="Nakamura Y."/>
            <person name="Ohara O."/>
            <person name="Isogai T."/>
            <person name="Sugano S."/>
        </authorList>
    </citation>
    <scope>NUCLEOTIDE SEQUENCE [LARGE SCALE MRNA] (ISOFORMS 1; 2; 3 AND 4)</scope>
    <source>
        <tissue>Caudate nucleus</tissue>
    </source>
</reference>
<reference key="3">
    <citation type="journal article" date="2006" name="Nature">
        <title>The finished DNA sequence of human chromosome 12.</title>
        <authorList>
            <person name="Scherer S.E."/>
            <person name="Muzny D.M."/>
            <person name="Buhay C.J."/>
            <person name="Chen R."/>
            <person name="Cree A."/>
            <person name="Ding Y."/>
            <person name="Dugan-Rocha S."/>
            <person name="Gill R."/>
            <person name="Gunaratne P."/>
            <person name="Harris R.A."/>
            <person name="Hawes A.C."/>
            <person name="Hernandez J."/>
            <person name="Hodgson A.V."/>
            <person name="Hume J."/>
            <person name="Jackson A."/>
            <person name="Khan Z.M."/>
            <person name="Kovar-Smith C."/>
            <person name="Lewis L.R."/>
            <person name="Lozado R.J."/>
            <person name="Metzker M.L."/>
            <person name="Milosavljevic A."/>
            <person name="Miner G.R."/>
            <person name="Montgomery K.T."/>
            <person name="Morgan M.B."/>
            <person name="Nazareth L.V."/>
            <person name="Scott G."/>
            <person name="Sodergren E."/>
            <person name="Song X.-Z."/>
            <person name="Steffen D."/>
            <person name="Lovering R.C."/>
            <person name="Wheeler D.A."/>
            <person name="Worley K.C."/>
            <person name="Yuan Y."/>
            <person name="Zhang Z."/>
            <person name="Adams C.Q."/>
            <person name="Ansari-Lari M.A."/>
            <person name="Ayele M."/>
            <person name="Brown M.J."/>
            <person name="Chen G."/>
            <person name="Chen Z."/>
            <person name="Clerc-Blankenburg K.P."/>
            <person name="Davis C."/>
            <person name="Delgado O."/>
            <person name="Dinh H.H."/>
            <person name="Draper H."/>
            <person name="Gonzalez-Garay M.L."/>
            <person name="Havlak P."/>
            <person name="Jackson L.R."/>
            <person name="Jacob L.S."/>
            <person name="Kelly S.H."/>
            <person name="Li L."/>
            <person name="Li Z."/>
            <person name="Liu J."/>
            <person name="Liu W."/>
            <person name="Lu J."/>
            <person name="Maheshwari M."/>
            <person name="Nguyen B.-V."/>
            <person name="Okwuonu G.O."/>
            <person name="Pasternak S."/>
            <person name="Perez L.M."/>
            <person name="Plopper F.J.H."/>
            <person name="Santibanez J."/>
            <person name="Shen H."/>
            <person name="Tabor P.E."/>
            <person name="Verduzco D."/>
            <person name="Waldron L."/>
            <person name="Wang Q."/>
            <person name="Williams G.A."/>
            <person name="Zhang J."/>
            <person name="Zhou J."/>
            <person name="Allen C.C."/>
            <person name="Amin A.G."/>
            <person name="Anyalebechi V."/>
            <person name="Bailey M."/>
            <person name="Barbaria J.A."/>
            <person name="Bimage K.E."/>
            <person name="Bryant N.P."/>
            <person name="Burch P.E."/>
            <person name="Burkett C.E."/>
            <person name="Burrell K.L."/>
            <person name="Calderon E."/>
            <person name="Cardenas V."/>
            <person name="Carter K."/>
            <person name="Casias K."/>
            <person name="Cavazos I."/>
            <person name="Cavazos S.R."/>
            <person name="Ceasar H."/>
            <person name="Chacko J."/>
            <person name="Chan S.N."/>
            <person name="Chavez D."/>
            <person name="Christopoulos C."/>
            <person name="Chu J."/>
            <person name="Cockrell R."/>
            <person name="Cox C.D."/>
            <person name="Dang M."/>
            <person name="Dathorne S.R."/>
            <person name="David R."/>
            <person name="Davis C.M."/>
            <person name="Davy-Carroll L."/>
            <person name="Deshazo D.R."/>
            <person name="Donlin J.E."/>
            <person name="D'Souza L."/>
            <person name="Eaves K.A."/>
            <person name="Egan A."/>
            <person name="Emery-Cohen A.J."/>
            <person name="Escotto M."/>
            <person name="Flagg N."/>
            <person name="Forbes L.D."/>
            <person name="Gabisi A.M."/>
            <person name="Garza M."/>
            <person name="Hamilton C."/>
            <person name="Henderson N."/>
            <person name="Hernandez O."/>
            <person name="Hines S."/>
            <person name="Hogues M.E."/>
            <person name="Huang M."/>
            <person name="Idlebird D.G."/>
            <person name="Johnson R."/>
            <person name="Jolivet A."/>
            <person name="Jones S."/>
            <person name="Kagan R."/>
            <person name="King L.M."/>
            <person name="Leal B."/>
            <person name="Lebow H."/>
            <person name="Lee S."/>
            <person name="LeVan J.M."/>
            <person name="Lewis L.C."/>
            <person name="London P."/>
            <person name="Lorensuhewa L.M."/>
            <person name="Loulseged H."/>
            <person name="Lovett D.A."/>
            <person name="Lucier A."/>
            <person name="Lucier R.L."/>
            <person name="Ma J."/>
            <person name="Madu R.C."/>
            <person name="Mapua P."/>
            <person name="Martindale A.D."/>
            <person name="Martinez E."/>
            <person name="Massey E."/>
            <person name="Mawhiney S."/>
            <person name="Meador M.G."/>
            <person name="Mendez S."/>
            <person name="Mercado C."/>
            <person name="Mercado I.C."/>
            <person name="Merritt C.E."/>
            <person name="Miner Z.L."/>
            <person name="Minja E."/>
            <person name="Mitchell T."/>
            <person name="Mohabbat F."/>
            <person name="Mohabbat K."/>
            <person name="Montgomery B."/>
            <person name="Moore N."/>
            <person name="Morris S."/>
            <person name="Munidasa M."/>
            <person name="Ngo R.N."/>
            <person name="Nguyen N.B."/>
            <person name="Nickerson E."/>
            <person name="Nwaokelemeh O.O."/>
            <person name="Nwokenkwo S."/>
            <person name="Obregon M."/>
            <person name="Oguh M."/>
            <person name="Oragunye N."/>
            <person name="Oviedo R.J."/>
            <person name="Parish B.J."/>
            <person name="Parker D.N."/>
            <person name="Parrish J."/>
            <person name="Parks K.L."/>
            <person name="Paul H.A."/>
            <person name="Payton B.A."/>
            <person name="Perez A."/>
            <person name="Perrin W."/>
            <person name="Pickens A."/>
            <person name="Primus E.L."/>
            <person name="Pu L.-L."/>
            <person name="Puazo M."/>
            <person name="Quiles M.M."/>
            <person name="Quiroz J.B."/>
            <person name="Rabata D."/>
            <person name="Reeves K."/>
            <person name="Ruiz S.J."/>
            <person name="Shao H."/>
            <person name="Sisson I."/>
            <person name="Sonaike T."/>
            <person name="Sorelle R.P."/>
            <person name="Sutton A.E."/>
            <person name="Svatek A.F."/>
            <person name="Svetz L.A."/>
            <person name="Tamerisa K.S."/>
            <person name="Taylor T.R."/>
            <person name="Teague B."/>
            <person name="Thomas N."/>
            <person name="Thorn R.D."/>
            <person name="Trejos Z.Y."/>
            <person name="Trevino B.K."/>
            <person name="Ukegbu O.N."/>
            <person name="Urban J.B."/>
            <person name="Vasquez L.I."/>
            <person name="Vera V.A."/>
            <person name="Villasana D.M."/>
            <person name="Wang L."/>
            <person name="Ward-Moore S."/>
            <person name="Warren J.T."/>
            <person name="Wei X."/>
            <person name="White F."/>
            <person name="Williamson A.L."/>
            <person name="Wleczyk R."/>
            <person name="Wooden H.S."/>
            <person name="Wooden S.H."/>
            <person name="Yen J."/>
            <person name="Yoon L."/>
            <person name="Yoon V."/>
            <person name="Zorrilla S.E."/>
            <person name="Nelson D."/>
            <person name="Kucherlapati R."/>
            <person name="Weinstock G."/>
            <person name="Gibbs R.A."/>
        </authorList>
    </citation>
    <scope>NUCLEOTIDE SEQUENCE [LARGE SCALE GENOMIC DNA]</scope>
</reference>
<reference key="4">
    <citation type="submission" date="2005-07" db="EMBL/GenBank/DDBJ databases">
        <authorList>
            <person name="Mural R.J."/>
            <person name="Istrail S."/>
            <person name="Sutton G.G."/>
            <person name="Florea L."/>
            <person name="Halpern A.L."/>
            <person name="Mobarry C.M."/>
            <person name="Lippert R."/>
            <person name="Walenz B."/>
            <person name="Shatkay H."/>
            <person name="Dew I."/>
            <person name="Miller J.R."/>
            <person name="Flanigan M.J."/>
            <person name="Edwards N.J."/>
            <person name="Bolanos R."/>
            <person name="Fasulo D."/>
            <person name="Halldorsson B.V."/>
            <person name="Hannenhalli S."/>
            <person name="Turner R."/>
            <person name="Yooseph S."/>
            <person name="Lu F."/>
            <person name="Nusskern D.R."/>
            <person name="Shue B.C."/>
            <person name="Zheng X.H."/>
            <person name="Zhong F."/>
            <person name="Delcher A.L."/>
            <person name="Huson D.H."/>
            <person name="Kravitz S.A."/>
            <person name="Mouchard L."/>
            <person name="Reinert K."/>
            <person name="Remington K.A."/>
            <person name="Clark A.G."/>
            <person name="Waterman M.S."/>
            <person name="Eichler E.E."/>
            <person name="Adams M.D."/>
            <person name="Hunkapiller M.W."/>
            <person name="Myers E.W."/>
            <person name="Venter J.C."/>
        </authorList>
    </citation>
    <scope>NUCLEOTIDE SEQUENCE [LARGE SCALE GENOMIC DNA]</scope>
</reference>
<reference key="5">
    <citation type="journal article" date="2004" name="Genome Res.">
        <title>The status, quality, and expansion of the NIH full-length cDNA project: the Mammalian Gene Collection (MGC).</title>
        <authorList>
            <consortium name="The MGC Project Team"/>
        </authorList>
    </citation>
    <scope>NUCLEOTIDE SEQUENCE [LARGE SCALE MRNA] (ISOFORM 1)</scope>
    <source>
        <tissue>Lung</tissue>
        <tissue>Urinary bladder</tissue>
    </source>
</reference>
<reference key="6">
    <citation type="submission" date="2009-03" db="UniProtKB">
        <authorList>
            <person name="Bienvenut W.V."/>
            <person name="Waridel P."/>
            <person name="Quadroni M."/>
        </authorList>
    </citation>
    <scope>PROTEIN SEQUENCE OF 13-65; 72-88 AND 96-122</scope>
    <scope>PHOSPHORYLATION AT SER-113</scope>
    <scope>IDENTIFICATION BY MASS SPECTROMETRY</scope>
    <source>
        <tissue>Embryonic kidney</tissue>
    </source>
</reference>
<reference key="7">
    <citation type="journal article" date="2001" name="J. Biol. Chem.">
        <title>Stable association of hsp90 and p23, but Not hsp70, with active human telomerase.</title>
        <authorList>
            <person name="Forsythe H.L."/>
            <person name="Jarvis J.L."/>
            <person name="Turner J.W."/>
            <person name="Elmore L.W."/>
            <person name="Holt S.E."/>
        </authorList>
    </citation>
    <scope>INTERACTION WITH TERT</scope>
    <scope>FUNCTION AS A CO-CHAPERONE IN TELOMERASE HOLOENZYME ASSEMBLY</scope>
</reference>
<reference key="8">
    <citation type="journal article" date="2002" name="Science">
        <title>Disassembly of transcriptional regulatory complexes by molecular chaperones.</title>
        <authorList>
            <person name="Freeman B.C."/>
            <person name="Yamamoto K.R."/>
        </authorList>
    </citation>
    <scope>FUNCTION AS A CHAPERONE</scope>
</reference>
<reference key="9">
    <citation type="journal article" date="2000" name="J. Biol. Chem.">
        <title>Molecular identification of cytosolic prostaglandin E2 synthase that is functionally coupled with cyclooxygenase-1 in immediate prostaglandin E2 biosynthesis.</title>
        <authorList>
            <person name="Tanioka T."/>
            <person name="Nakatani Y."/>
            <person name="Semmyo N."/>
            <person name="Murakami M."/>
            <person name="Kudo I."/>
        </authorList>
    </citation>
    <scope>FUNCTION AS A PROSTAGLANDIN SYNTHASE</scope>
    <scope>BIOPHYSICOCHEMICAL PROPERTIES</scope>
    <scope>CATALYTIC ACTIVITY</scope>
    <scope>PATHWAY</scope>
</reference>
<reference key="10">
    <citation type="journal article" date="2003" name="Nature">
        <title>Proteomic characterization of the human centrosome by protein correlation profiling.</title>
        <authorList>
            <person name="Andersen J.S."/>
            <person name="Wilkinson C.J."/>
            <person name="Mayor T."/>
            <person name="Mortensen P."/>
            <person name="Nigg E.A."/>
            <person name="Mann M."/>
        </authorList>
    </citation>
    <scope>IDENTIFICATION BY MASS SPECTROMETRY</scope>
    <source>
        <tissue>Lymphoblast</tissue>
    </source>
</reference>
<reference key="11">
    <citation type="journal article" date="2006" name="Cell">
        <title>Global, in vivo, and site-specific phosphorylation dynamics in signaling networks.</title>
        <authorList>
            <person name="Olsen J.V."/>
            <person name="Blagoev B."/>
            <person name="Gnad F."/>
            <person name="Macek B."/>
            <person name="Kumar C."/>
            <person name="Mortensen P."/>
            <person name="Mann M."/>
        </authorList>
    </citation>
    <scope>PHOSPHORYLATION [LARGE SCALE ANALYSIS] AT SER-113; SER-118; SER-148 AND SER-151</scope>
    <scope>IDENTIFICATION BY MASS SPECTROMETRY [LARGE SCALE ANALYSIS]</scope>
    <source>
        <tissue>Cervix carcinoma</tissue>
    </source>
</reference>
<reference key="12">
    <citation type="journal article" date="2006" name="Pituitary">
        <title>Phosphoproteomic analysis of the human pituitary.</title>
        <authorList>
            <person name="Beranova-Giorgianni S."/>
            <person name="Zhao Y."/>
            <person name="Desiderio D.M."/>
            <person name="Giorgianni F."/>
        </authorList>
    </citation>
    <scope>PHOSPHORYLATION [LARGE SCALE ANALYSIS] AT SER-113</scope>
    <scope>IDENTIFICATION BY MASS SPECTROMETRY [LARGE SCALE ANALYSIS]</scope>
    <source>
        <tissue>Pituitary</tissue>
    </source>
</reference>
<reference key="13">
    <citation type="journal article" date="2007" name="Electrophoresis">
        <title>Toward a global characterization of the phosphoproteome in prostate cancer cells: identification of phosphoproteins in the LNCaP cell line.</title>
        <authorList>
            <person name="Giorgianni F."/>
            <person name="Zhao Y."/>
            <person name="Desiderio D.M."/>
            <person name="Beranova-Giorgianni S."/>
        </authorList>
    </citation>
    <scope>PHOSPHORYLATION [LARGE SCALE ANALYSIS] AT SER-113</scope>
    <scope>IDENTIFICATION BY MASS SPECTROMETRY [LARGE SCALE ANALYSIS]</scope>
    <source>
        <tissue>Prostate cancer</tissue>
    </source>
</reference>
<reference key="14">
    <citation type="journal article" date="2008" name="J. Proteome Res.">
        <title>Phosphorylation analysis of primary human T lymphocytes using sequential IMAC and titanium oxide enrichment.</title>
        <authorList>
            <person name="Carrascal M."/>
            <person name="Ovelleiro D."/>
            <person name="Casas V."/>
            <person name="Gay M."/>
            <person name="Abian J."/>
        </authorList>
    </citation>
    <scope>PHOSPHORYLATION [LARGE SCALE ANALYSIS] AT SER-113</scope>
    <scope>IDENTIFICATION BY MASS SPECTROMETRY [LARGE SCALE ANALYSIS]</scope>
    <source>
        <tissue>T-cell</tissue>
    </source>
</reference>
<reference key="15">
    <citation type="journal article" date="2008" name="J. Proteome Res.">
        <title>Phosphoproteome of resting human platelets.</title>
        <authorList>
            <person name="Zahedi R.P."/>
            <person name="Lewandrowski U."/>
            <person name="Wiesner J."/>
            <person name="Wortelkamp S."/>
            <person name="Moebius J."/>
            <person name="Schuetz C."/>
            <person name="Walter U."/>
            <person name="Gambaryan S."/>
            <person name="Sickmann A."/>
        </authorList>
    </citation>
    <scope>PHOSPHORYLATION [LARGE SCALE ANALYSIS] AT SER-113</scope>
    <scope>IDENTIFICATION BY MASS SPECTROMETRY [LARGE SCALE ANALYSIS]</scope>
    <source>
        <tissue>Platelet</tissue>
    </source>
</reference>
<reference key="16">
    <citation type="journal article" date="2008" name="Mol. Cell">
        <title>Kinase-selective enrichment enables quantitative phosphoproteomics of the kinome across the cell cycle.</title>
        <authorList>
            <person name="Daub H."/>
            <person name="Olsen J.V."/>
            <person name="Bairlein M."/>
            <person name="Gnad F."/>
            <person name="Oppermann F.S."/>
            <person name="Korner R."/>
            <person name="Greff Z."/>
            <person name="Keri G."/>
            <person name="Stemmann O."/>
            <person name="Mann M."/>
        </authorList>
    </citation>
    <scope>PHOSPHORYLATION [LARGE SCALE ANALYSIS] AT SER-113; SER-148 AND SER-151</scope>
    <scope>IDENTIFICATION BY MASS SPECTROMETRY [LARGE SCALE ANALYSIS]</scope>
    <source>
        <tissue>Cervix carcinoma</tissue>
    </source>
</reference>
<reference key="17">
    <citation type="journal article" date="2008" name="Proc. Natl. Acad. Sci. U.S.A.">
        <title>A quantitative atlas of mitotic phosphorylation.</title>
        <authorList>
            <person name="Dephoure N."/>
            <person name="Zhou C."/>
            <person name="Villen J."/>
            <person name="Beausoleil S.A."/>
            <person name="Bakalarski C.E."/>
            <person name="Elledge S.J."/>
            <person name="Gygi S.P."/>
        </authorList>
    </citation>
    <scope>PHOSPHORYLATION [LARGE SCALE ANALYSIS] AT SER-113; SER-148 AND SER-151</scope>
    <scope>IDENTIFICATION BY MASS SPECTROMETRY [LARGE SCALE ANALYSIS]</scope>
    <source>
        <tissue>Cervix carcinoma</tissue>
    </source>
</reference>
<reference key="18">
    <citation type="journal article" date="2008" name="Proteomics">
        <title>Large-scale phosphoproteome analysis of human liver tissue by enrichment and fractionation of phosphopeptides with strong anion exchange chromatography.</title>
        <authorList>
            <person name="Han G."/>
            <person name="Ye M."/>
            <person name="Zhou H."/>
            <person name="Jiang X."/>
            <person name="Feng S."/>
            <person name="Jiang X."/>
            <person name="Tian R."/>
            <person name="Wan D."/>
            <person name="Zou H."/>
            <person name="Gu J."/>
        </authorList>
    </citation>
    <scope>PHOSPHORYLATION [LARGE SCALE ANALYSIS] AT SER-113</scope>
    <scope>IDENTIFICATION BY MASS SPECTROMETRY [LARGE SCALE ANALYSIS]</scope>
    <source>
        <tissue>Liver</tissue>
    </source>
</reference>
<reference key="19">
    <citation type="journal article" date="2009" name="Anal. Chem.">
        <title>Lys-N and trypsin cover complementary parts of the phosphoproteome in a refined SCX-based approach.</title>
        <authorList>
            <person name="Gauci S."/>
            <person name="Helbig A.O."/>
            <person name="Slijper M."/>
            <person name="Krijgsveld J."/>
            <person name="Heck A.J."/>
            <person name="Mohammed S."/>
        </authorList>
    </citation>
    <scope>IDENTIFICATION BY MASS SPECTROMETRY [LARGE SCALE ANALYSIS]</scope>
</reference>
<reference key="20">
    <citation type="journal article" date="2009" name="Mol. Cell. Proteomics">
        <title>Large-scale proteomics analysis of the human kinome.</title>
        <authorList>
            <person name="Oppermann F.S."/>
            <person name="Gnad F."/>
            <person name="Olsen J.V."/>
            <person name="Hornberger R."/>
            <person name="Greff Z."/>
            <person name="Keri G."/>
            <person name="Mann M."/>
            <person name="Daub H."/>
        </authorList>
    </citation>
    <scope>PHOSPHORYLATION [LARGE SCALE ANALYSIS] AT SER-113</scope>
    <scope>IDENTIFICATION BY MASS SPECTROMETRY [LARGE SCALE ANALYSIS]</scope>
</reference>
<reference key="21">
    <citation type="journal article" date="2009" name="Sci. Signal.">
        <title>Quantitative phosphoproteomic analysis of T cell receptor signaling reveals system-wide modulation of protein-protein interactions.</title>
        <authorList>
            <person name="Mayya V."/>
            <person name="Lundgren D.H."/>
            <person name="Hwang S.-I."/>
            <person name="Rezaul K."/>
            <person name="Wu L."/>
            <person name="Eng J.K."/>
            <person name="Rodionov V."/>
            <person name="Han D.K."/>
        </authorList>
    </citation>
    <scope>PHOSPHORYLATION [LARGE SCALE ANALYSIS] AT SER-113</scope>
    <scope>IDENTIFICATION BY MASS SPECTROMETRY [LARGE SCALE ANALYSIS]</scope>
    <source>
        <tissue>Leukemic T-cell</tissue>
    </source>
</reference>
<reference key="22">
    <citation type="journal article" date="2009" name="Science">
        <title>Lysine acetylation targets protein complexes and co-regulates major cellular functions.</title>
        <authorList>
            <person name="Choudhary C."/>
            <person name="Kumar C."/>
            <person name="Gnad F."/>
            <person name="Nielsen M.L."/>
            <person name="Rehman M."/>
            <person name="Walther T.C."/>
            <person name="Olsen J.V."/>
            <person name="Mann M."/>
        </authorList>
    </citation>
    <scope>ACETYLATION [LARGE SCALE ANALYSIS] AT LYS-33</scope>
    <scope>IDENTIFICATION BY MASS SPECTROMETRY [LARGE SCALE ANALYSIS]</scope>
</reference>
<reference key="23">
    <citation type="journal article" date="2010" name="Sci. Signal.">
        <title>Quantitative phosphoproteomics reveals widespread full phosphorylation site occupancy during mitosis.</title>
        <authorList>
            <person name="Olsen J.V."/>
            <person name="Vermeulen M."/>
            <person name="Santamaria A."/>
            <person name="Kumar C."/>
            <person name="Miller M.L."/>
            <person name="Jensen L.J."/>
            <person name="Gnad F."/>
            <person name="Cox J."/>
            <person name="Jensen T.S."/>
            <person name="Nigg E.A."/>
            <person name="Brunak S."/>
            <person name="Mann M."/>
        </authorList>
    </citation>
    <scope>PHOSPHORYLATION [LARGE SCALE ANALYSIS] AT SER-113 AND SER-118</scope>
    <scope>IDENTIFICATION BY MASS SPECTROMETRY [LARGE SCALE ANALYSIS]</scope>
    <source>
        <tissue>Cervix carcinoma</tissue>
    </source>
</reference>
<reference key="24">
    <citation type="journal article" date="2011" name="BMC Syst. Biol.">
        <title>Initial characterization of the human central proteome.</title>
        <authorList>
            <person name="Burkard T.R."/>
            <person name="Planyavsky M."/>
            <person name="Kaupe I."/>
            <person name="Breitwieser F.P."/>
            <person name="Buerckstuemmer T."/>
            <person name="Bennett K.L."/>
            <person name="Superti-Furga G."/>
            <person name="Colinge J."/>
        </authorList>
    </citation>
    <scope>IDENTIFICATION BY MASS SPECTROMETRY [LARGE SCALE ANALYSIS]</scope>
</reference>
<reference key="25">
    <citation type="journal article" date="2011" name="Sci. Signal.">
        <title>System-wide temporal characterization of the proteome and phosphoproteome of human embryonic stem cell differentiation.</title>
        <authorList>
            <person name="Rigbolt K.T."/>
            <person name="Prokhorova T.A."/>
            <person name="Akimov V."/>
            <person name="Henningsen J."/>
            <person name="Johansen P.T."/>
            <person name="Kratchmarova I."/>
            <person name="Kassem M."/>
            <person name="Mann M."/>
            <person name="Olsen J.V."/>
            <person name="Blagoev B."/>
        </authorList>
    </citation>
    <scope>PHOSPHORYLATION [LARGE SCALE ANALYSIS] AT SER-113</scope>
    <scope>IDENTIFICATION BY MASS SPECTROMETRY [LARGE SCALE ANALYSIS]</scope>
</reference>
<reference key="26">
    <citation type="journal article" date="2012" name="Proc. Natl. Acad. Sci. U.S.A.">
        <title>Caspase-7 uses an exosite to promote poly(ADP ribose) polymerase 1 proteolysis.</title>
        <authorList>
            <person name="Boucher D."/>
            <person name="Blais V."/>
            <person name="Denault J.B."/>
        </authorList>
    </citation>
    <scope>PROTEOLYTIC CLEAVAGE</scope>
</reference>
<reference key="27">
    <citation type="journal article" date="2012" name="Proc. Natl. Acad. Sci. U.S.A.">
        <title>N-terminal acetylome analyses and functional insights of the N-terminal acetyltransferase NatB.</title>
        <authorList>
            <person name="Van Damme P."/>
            <person name="Lasa M."/>
            <person name="Polevoda B."/>
            <person name="Gazquez C."/>
            <person name="Elosegui-Artola A."/>
            <person name="Kim D.S."/>
            <person name="De Juan-Pardo E."/>
            <person name="Demeyer K."/>
            <person name="Hole K."/>
            <person name="Larrea E."/>
            <person name="Timmerman E."/>
            <person name="Prieto J."/>
            <person name="Arnesen T."/>
            <person name="Sherman F."/>
            <person name="Gevaert K."/>
            <person name="Aldabe R."/>
        </authorList>
    </citation>
    <scope>IDENTIFICATION BY MASS SPECTROMETRY [LARGE SCALE ANALYSIS]</scope>
</reference>
<reference key="28">
    <citation type="journal article" date="2013" name="J. Proteome Res.">
        <title>Toward a comprehensive characterization of a human cancer cell phosphoproteome.</title>
        <authorList>
            <person name="Zhou H."/>
            <person name="Di Palma S."/>
            <person name="Preisinger C."/>
            <person name="Peng M."/>
            <person name="Polat A.N."/>
            <person name="Heck A.J."/>
            <person name="Mohammed S."/>
        </authorList>
    </citation>
    <scope>PHOSPHORYLATION [LARGE SCALE ANALYSIS] AT SER-44; SER-85 AND SER-113</scope>
    <scope>IDENTIFICATION BY MASS SPECTROMETRY [LARGE SCALE ANALYSIS]</scope>
    <source>
        <tissue>Cervix carcinoma</tissue>
        <tissue>Erythroleukemia</tissue>
    </source>
</reference>
<reference key="29">
    <citation type="journal article" date="2014" name="J. Biol. Chem.">
        <title>Defective Tibetan PHD2 binding to p23 links high altitude adaption to altered oxygen sensing.</title>
        <authorList>
            <person name="Song D."/>
            <person name="Li L.S."/>
            <person name="Arsenault P.R."/>
            <person name="Tan Q."/>
            <person name="Bigham A.W."/>
            <person name="Heaton-Johnson K.J."/>
            <person name="Master S.R."/>
            <person name="Lee F.S."/>
        </authorList>
    </citation>
    <scope>FUNCTION</scope>
    <scope>INTERACTION WITH EGLN1</scope>
</reference>
<reference key="30">
    <citation type="journal article" date="2014" name="J. Proteomics">
        <title>An enzyme assisted RP-RPLC approach for in-depth analysis of human liver phosphoproteome.</title>
        <authorList>
            <person name="Bian Y."/>
            <person name="Song C."/>
            <person name="Cheng K."/>
            <person name="Dong M."/>
            <person name="Wang F."/>
            <person name="Huang J."/>
            <person name="Sun D."/>
            <person name="Wang L."/>
            <person name="Ye M."/>
            <person name="Zou H."/>
        </authorList>
    </citation>
    <scope>PHOSPHORYLATION [LARGE SCALE ANALYSIS] AT SER-85; SER-113; SER-148 AND SER-151</scope>
    <scope>PHOSPHORYLATION [LARGE SCALE ANALYSIS] AT SER-130 (ISOFORM 4)</scope>
    <scope>IDENTIFICATION BY MASS SPECTROMETRY [LARGE SCALE ANALYSIS]</scope>
    <source>
        <tissue>Liver</tissue>
    </source>
</reference>
<reference key="31">
    <citation type="journal article" date="2015" name="Proteomics">
        <title>N-terminome analysis of the human mitochondrial proteome.</title>
        <authorList>
            <person name="Vaca Jacome A.S."/>
            <person name="Rabilloud T."/>
            <person name="Schaeffer-Reiss C."/>
            <person name="Rompais M."/>
            <person name="Ayoub D."/>
            <person name="Lane L."/>
            <person name="Bairoch A."/>
            <person name="Van Dorsselaer A."/>
            <person name="Carapito C."/>
        </authorList>
    </citation>
    <scope>IDENTIFICATION BY MASS SPECTROMETRY [LARGE SCALE ANALYSIS]</scope>
</reference>
<reference key="32">
    <citation type="journal article" date="2016" name="Nat. Commun.">
        <title>The FNIP co-chaperones decelerate the Hsp90 chaperone cycle and enhance drug binding.</title>
        <authorList>
            <person name="Woodford M.R."/>
            <person name="Dunn D.M."/>
            <person name="Blanden A.R."/>
            <person name="Capriotti D."/>
            <person name="Loiselle D."/>
            <person name="Prodromou C."/>
            <person name="Panaretou B."/>
            <person name="Hughes P.F."/>
            <person name="Smith A."/>
            <person name="Ackerman W."/>
            <person name="Haystead T.A."/>
            <person name="Loh S.N."/>
            <person name="Bourboulia D."/>
            <person name="Schmidt L.S."/>
            <person name="Marston Linehan W."/>
            <person name="Bratslavsky G."/>
            <person name="Mollapour M."/>
        </authorList>
    </citation>
    <scope>INTERACTION WITH HSP90AA1; FLCN; FNIP1 AND FNIP2</scope>
</reference>
<reference key="33">
    <citation type="journal article" date="2017" name="Biochemistry">
        <title>Characterization of Hsp90 co-chaperone p23 cleavage by caspase-7 uncovers a peptidase-substrate interaction involving intrinsically disordered regions.</title>
        <authorList>
            <person name="Martini C."/>
            <person name="Bedard M."/>
            <person name="Lavigne P."/>
            <person name="Denault J.B."/>
        </authorList>
    </citation>
    <scope>PROTEOLYTIC CLEAVAGE</scope>
</reference>
<reference key="34">
    <citation type="journal article" date="2017" name="EMBO J.">
        <title>Tumor suppressor Tsc1 is a new Hsp90 co-chaperone that facilitates folding of kinase and non-kinase clients.</title>
        <authorList>
            <person name="Woodford M.R."/>
            <person name="Sager R.A."/>
            <person name="Marris E."/>
            <person name="Dunn D.M."/>
            <person name="Blanden A.R."/>
            <person name="Murphy R.L."/>
            <person name="Rensing N."/>
            <person name="Shapiro O."/>
            <person name="Panaretou B."/>
            <person name="Prodromou C."/>
            <person name="Loh S.N."/>
            <person name="Gutmann D.H."/>
            <person name="Bourboulia D."/>
            <person name="Bratslavsky G."/>
            <person name="Wong M."/>
            <person name="Mollapour M."/>
        </authorList>
    </citation>
    <scope>IDENTIFICATION IN A COMPLEX WITH HSP90; HSP70; STIP1; CDC37; PPP5C; TSC1 AND TSC2</scope>
</reference>
<reference key="35">
    <citation type="journal article" date="2017" name="Nat. Struct. Mol. Biol.">
        <title>Site-specific mapping of the human SUMO proteome reveals co-modification with phosphorylation.</title>
        <authorList>
            <person name="Hendriks I.A."/>
            <person name="Lyon D."/>
            <person name="Young C."/>
            <person name="Jensen L.J."/>
            <person name="Vertegaal A.C."/>
            <person name="Nielsen M.L."/>
        </authorList>
    </citation>
    <scope>SUMOYLATION [LARGE SCALE ANALYSIS] AT LYS-35 AND LYS-65</scope>
    <scope>IDENTIFICATION BY MASS SPECTROMETRY [LARGE SCALE ANALYSIS]</scope>
</reference>
<reference key="36">
    <citation type="journal article" date="2000" name="J. Biol. Chem.">
        <title>Crystal structure and activity of human p23, a heat shock protein 90 co-chaperone.</title>
        <authorList>
            <person name="Weaver A.J."/>
            <person name="Sullivan W.P."/>
            <person name="Felts S.J."/>
            <person name="Owen B.A.L."/>
            <person name="Toft D.O."/>
        </authorList>
    </citation>
    <scope>X-RAY CRYSTALLOGRAPHY (2.49 ANGSTROMS) OF 1-125</scope>
</reference>
<sequence>MQPASAKWYDRRDYVFIEFCVEDSKDVNVNFEKSKLTFSCLGGSDNFKHLNEIDLFHCIDPNDSKHKRTDRSILCCLRKGESGQSWPRLTKERAKLNWLSVDFNNWKDWEDDSDEDMSNFDRFSEMMNNMGGDEDVDLPEVDGADDDSQDSDDEKMPDLE</sequence>
<feature type="chain" id="PRO_0000218952" description="Prostaglandin E synthase 3">
    <location>
        <begin position="1"/>
        <end position="160"/>
    </location>
</feature>
<feature type="domain" description="CS" evidence="3">
    <location>
        <begin position="1"/>
        <end position="90"/>
    </location>
</feature>
<feature type="region of interest" description="Disordered" evidence="4">
    <location>
        <begin position="124"/>
        <end position="160"/>
    </location>
</feature>
<feature type="short sequence motif" description="PXLE motif" evidence="15">
    <location>
        <begin position="157"/>
        <end position="160"/>
    </location>
</feature>
<feature type="compositionally biased region" description="Acidic residues" evidence="4">
    <location>
        <begin position="132"/>
        <end position="153"/>
    </location>
</feature>
<feature type="site" description="Cleavage; by caspase-7" evidence="11">
    <location>
        <begin position="142"/>
        <end position="143"/>
    </location>
</feature>
<feature type="modified residue" description="N6-acetyllysine" evidence="26">
    <location>
        <position position="33"/>
    </location>
</feature>
<feature type="modified residue" description="Phosphoserine" evidence="30">
    <location>
        <position position="44"/>
    </location>
</feature>
<feature type="modified residue" description="Phosphoserine" evidence="30 31">
    <location>
        <position position="85"/>
    </location>
</feature>
<feature type="modified residue" description="Phosphoserine" evidence="2">
    <location>
        <position position="100"/>
    </location>
</feature>
<feature type="modified residue" description="Phosphoserine" evidence="13 17 18 19 20 21 22 23 24 25 27 28 29 30 31">
    <location>
        <position position="113"/>
    </location>
</feature>
<feature type="modified residue" description="Phosphoserine" evidence="18 28">
    <location>
        <position position="118"/>
    </location>
</feature>
<feature type="modified residue" description="Phosphoserine" evidence="18 22 23 31">
    <location>
        <position position="148"/>
    </location>
</feature>
<feature type="modified residue" description="Phosphoserine" evidence="18 22 23 31">
    <location>
        <position position="151"/>
    </location>
</feature>
<feature type="cross-link" description="Glycyl lysine isopeptide (Lys-Gly) (interchain with G-Cter in SUMO2)" evidence="32">
    <location>
        <position position="35"/>
    </location>
</feature>
<feature type="cross-link" description="Glycyl lysine isopeptide (Lys-Gly) (interchain with G-Cter in SUMO2)" evidence="32">
    <location>
        <position position="65"/>
    </location>
</feature>
<feature type="splice variant" id="VSP_055363" description="In isoform 2." evidence="14">
    <location>
        <begin position="63"/>
        <end position="95"/>
    </location>
</feature>
<feature type="splice variant" id="VSP_055364" description="In isoform 3." evidence="14">
    <location>
        <begin position="96"/>
        <end position="125"/>
    </location>
</feature>
<feature type="splice variant" id="VSP_055365" description="In isoform 4." evidence="14">
    <location>
        <begin position="126"/>
        <end position="146"/>
    </location>
</feature>
<feature type="strand" evidence="33">
    <location>
        <begin position="6"/>
        <end position="10"/>
    </location>
</feature>
<feature type="strand" evidence="33">
    <location>
        <begin position="12"/>
        <end position="19"/>
    </location>
</feature>
<feature type="strand" evidence="33">
    <location>
        <begin position="24"/>
        <end position="32"/>
    </location>
</feature>
<feature type="strand" evidence="33">
    <location>
        <begin position="35"/>
        <end position="42"/>
    </location>
</feature>
<feature type="turn" evidence="33">
    <location>
        <begin position="43"/>
        <end position="46"/>
    </location>
</feature>
<feature type="strand" evidence="33">
    <location>
        <begin position="47"/>
        <end position="57"/>
    </location>
</feature>
<feature type="strand" evidence="33">
    <location>
        <begin position="59"/>
        <end position="68"/>
    </location>
</feature>
<feature type="strand" evidence="33">
    <location>
        <begin position="73"/>
        <end position="81"/>
    </location>
</feature>
<feature type="strand" evidence="33">
    <location>
        <begin position="87"/>
        <end position="92"/>
    </location>
</feature>
<feature type="strand" evidence="33">
    <location>
        <begin position="99"/>
        <end position="101"/>
    </location>
</feature>
<feature type="turn" evidence="33">
    <location>
        <begin position="103"/>
        <end position="105"/>
    </location>
</feature>
<feature type="helix" evidence="34">
    <location>
        <begin position="120"/>
        <end position="130"/>
    </location>
</feature>
<feature type="modified residue" description="Phosphoserine" evidence="31">
    <location sequence="Q15185-4">
        <position position="130"/>
    </location>
</feature>
<dbReference type="EC" id="5.3.99.3" evidence="5"/>
<dbReference type="EMBL" id="L24804">
    <property type="protein sequence ID" value="AAA18537.1"/>
    <property type="molecule type" value="mRNA"/>
</dbReference>
<dbReference type="EMBL" id="AK291945">
    <property type="protein sequence ID" value="BAF84634.1"/>
    <property type="molecule type" value="mRNA"/>
</dbReference>
<dbReference type="EMBL" id="AK295208">
    <property type="protein sequence ID" value="BAG58204.1"/>
    <property type="molecule type" value="mRNA"/>
</dbReference>
<dbReference type="EMBL" id="AK298147">
    <property type="protein sequence ID" value="BAG60423.1"/>
    <property type="molecule type" value="mRNA"/>
</dbReference>
<dbReference type="EMBL" id="AK298160">
    <property type="protein sequence ID" value="BAG60433.1"/>
    <property type="molecule type" value="mRNA"/>
</dbReference>
<dbReference type="EMBL" id="AC117378">
    <property type="status" value="NOT_ANNOTATED_CDS"/>
    <property type="molecule type" value="Genomic_DNA"/>
</dbReference>
<dbReference type="EMBL" id="CH471054">
    <property type="protein sequence ID" value="EAW96953.1"/>
    <property type="molecule type" value="Genomic_DNA"/>
</dbReference>
<dbReference type="EMBL" id="CH471054">
    <property type="protein sequence ID" value="EAW96958.1"/>
    <property type="molecule type" value="Genomic_DNA"/>
</dbReference>
<dbReference type="EMBL" id="BC003005">
    <property type="protein sequence ID" value="AAH03005.1"/>
    <property type="molecule type" value="mRNA"/>
</dbReference>
<dbReference type="EMBL" id="BC021167">
    <property type="protein sequence ID" value="AAH21167.1"/>
    <property type="molecule type" value="mRNA"/>
</dbReference>
<dbReference type="CCDS" id="CCDS31836.1">
    <molecule id="Q15185-1"/>
</dbReference>
<dbReference type="CCDS" id="CCDS61158.1">
    <molecule id="Q15185-2"/>
</dbReference>
<dbReference type="CCDS" id="CCDS61159.1">
    <molecule id="Q15185-3"/>
</dbReference>
<dbReference type="CCDS" id="CCDS61160.1">
    <molecule id="Q15185-4"/>
</dbReference>
<dbReference type="PIR" id="A56211">
    <property type="entry name" value="A56211"/>
</dbReference>
<dbReference type="RefSeq" id="NP_001269530.1">
    <molecule id="Q15185-4"/>
    <property type="nucleotide sequence ID" value="NM_001282601.2"/>
</dbReference>
<dbReference type="RefSeq" id="NP_001269531.1">
    <molecule id="Q15185-3"/>
    <property type="nucleotide sequence ID" value="NM_001282602.2"/>
</dbReference>
<dbReference type="RefSeq" id="NP_001269532.1">
    <molecule id="Q15185-2"/>
    <property type="nucleotide sequence ID" value="NM_001282603.2"/>
</dbReference>
<dbReference type="RefSeq" id="NP_001269533.1">
    <property type="nucleotide sequence ID" value="NM_001282604.1"/>
</dbReference>
<dbReference type="RefSeq" id="NP_001269534.1">
    <property type="nucleotide sequence ID" value="NM_001282605.1"/>
</dbReference>
<dbReference type="RefSeq" id="NP_006592.3">
    <molecule id="Q15185-1"/>
    <property type="nucleotide sequence ID" value="NM_006601.6"/>
</dbReference>
<dbReference type="PDB" id="1EJF">
    <property type="method" value="X-ray"/>
    <property type="resolution" value="2.49 A"/>
    <property type="chains" value="A/B=1-125"/>
</dbReference>
<dbReference type="PDB" id="7KRJ">
    <property type="method" value="EM"/>
    <property type="resolution" value="2.56 A"/>
    <property type="chains" value="C=1-160"/>
</dbReference>
<dbReference type="PDB" id="7L7I">
    <property type="method" value="EM"/>
    <property type="resolution" value="3.30 A"/>
    <property type="chains" value="E=1-160"/>
</dbReference>
<dbReference type="PDB" id="7L7J">
    <property type="method" value="EM"/>
    <property type="resolution" value="3.10 A"/>
    <property type="chains" value="C=1-160"/>
</dbReference>
<dbReference type="PDBsum" id="1EJF"/>
<dbReference type="PDBsum" id="7KRJ"/>
<dbReference type="PDBsum" id="7L7I"/>
<dbReference type="PDBsum" id="7L7J"/>
<dbReference type="BMRB" id="Q15185"/>
<dbReference type="EMDB" id="EMD-23004"/>
<dbReference type="EMDB" id="EMD-23005"/>
<dbReference type="EMDB" id="EMD-23006"/>
<dbReference type="EMDB" id="EMD-23213"/>
<dbReference type="EMDB" id="EMD-23214"/>
<dbReference type="SASBDB" id="Q15185"/>
<dbReference type="SMR" id="Q15185"/>
<dbReference type="BioGRID" id="115952">
    <property type="interactions" value="455"/>
</dbReference>
<dbReference type="CORUM" id="Q15185"/>
<dbReference type="DIP" id="DIP-279N"/>
<dbReference type="ELM" id="Q15185"/>
<dbReference type="FunCoup" id="Q15185">
    <property type="interactions" value="3086"/>
</dbReference>
<dbReference type="IntAct" id="Q15185">
    <property type="interactions" value="322"/>
</dbReference>
<dbReference type="MINT" id="Q15185"/>
<dbReference type="STRING" id="9606.ENSP00000482075"/>
<dbReference type="ChEMBL" id="CHEMBL3341580"/>
<dbReference type="DrugBank" id="DB00316">
    <property type="generic name" value="Acetaminophen"/>
</dbReference>
<dbReference type="DrugBank" id="DB09130">
    <property type="generic name" value="Copper"/>
</dbReference>
<dbReference type="DrugBank" id="DB05036">
    <property type="generic name" value="Grn163l"/>
</dbReference>
<dbReference type="SwissLipids" id="SLP:000000831"/>
<dbReference type="GlyGen" id="Q15185">
    <property type="glycosylation" value="1 site, 1 O-linked glycan (1 site)"/>
</dbReference>
<dbReference type="iPTMnet" id="Q15185"/>
<dbReference type="PhosphoSitePlus" id="Q15185"/>
<dbReference type="SwissPalm" id="Q15185"/>
<dbReference type="BioMuta" id="PTGES3"/>
<dbReference type="jPOST" id="Q15185"/>
<dbReference type="MassIVE" id="Q15185"/>
<dbReference type="PaxDb" id="9606-ENSP00000482075"/>
<dbReference type="PeptideAtlas" id="Q15185"/>
<dbReference type="PRIDE" id="Q15185"/>
<dbReference type="ProteomicsDB" id="4234"/>
<dbReference type="ProteomicsDB" id="4741"/>
<dbReference type="ProteomicsDB" id="4744"/>
<dbReference type="ProteomicsDB" id="60486">
    <molecule id="Q15185-1"/>
</dbReference>
<dbReference type="Pumba" id="Q15185"/>
<dbReference type="TopDownProteomics" id="Q15185-1">
    <molecule id="Q15185-1"/>
</dbReference>
<dbReference type="Antibodypedia" id="28360">
    <property type="antibodies" value="758 antibodies from 38 providers"/>
</dbReference>
<dbReference type="DNASU" id="10728"/>
<dbReference type="Ensembl" id="ENST00000262033.11">
    <molecule id="Q15185-1"/>
    <property type="protein sequence ID" value="ENSP00000262033.6"/>
    <property type="gene ID" value="ENSG00000110958.16"/>
</dbReference>
<dbReference type="Ensembl" id="ENST00000414274.7">
    <molecule id="Q15185-3"/>
    <property type="protein sequence ID" value="ENSP00000405299.3"/>
    <property type="gene ID" value="ENSG00000110958.16"/>
</dbReference>
<dbReference type="Ensembl" id="ENST00000436399.6">
    <molecule id="Q15185-2"/>
    <property type="protein sequence ID" value="ENSP00000402385.2"/>
    <property type="gene ID" value="ENSG00000110958.16"/>
</dbReference>
<dbReference type="Ensembl" id="ENST00000448157.6">
    <molecule id="Q15185-4"/>
    <property type="protein sequence ID" value="ENSP00000414892.2"/>
    <property type="gene ID" value="ENSG00000110958.16"/>
</dbReference>
<dbReference type="GeneID" id="10728"/>
<dbReference type="KEGG" id="hsa:10728"/>
<dbReference type="MANE-Select" id="ENST00000262033.11">
    <property type="protein sequence ID" value="ENSP00000262033.6"/>
    <property type="RefSeq nucleotide sequence ID" value="NM_006601.7"/>
    <property type="RefSeq protein sequence ID" value="NP_006592.3"/>
</dbReference>
<dbReference type="UCSC" id="uc001slu.6">
    <molecule id="Q15185-1"/>
    <property type="organism name" value="human"/>
</dbReference>
<dbReference type="AGR" id="HGNC:16049"/>
<dbReference type="CTD" id="10728"/>
<dbReference type="DisGeNET" id="10728"/>
<dbReference type="GeneCards" id="PTGES3"/>
<dbReference type="HGNC" id="HGNC:16049">
    <property type="gene designation" value="PTGES3"/>
</dbReference>
<dbReference type="HPA" id="ENSG00000110958">
    <property type="expression patterns" value="Low tissue specificity"/>
</dbReference>
<dbReference type="MIM" id="607061">
    <property type="type" value="gene"/>
</dbReference>
<dbReference type="neXtProt" id="NX_Q15185"/>
<dbReference type="OpenTargets" id="ENSG00000110958"/>
<dbReference type="PharmGKB" id="PA142671118"/>
<dbReference type="VEuPathDB" id="HostDB:ENSG00000110958"/>
<dbReference type="eggNOG" id="KOG3158">
    <property type="taxonomic scope" value="Eukaryota"/>
</dbReference>
<dbReference type="GeneTree" id="ENSGT00940000154256"/>
<dbReference type="InParanoid" id="Q15185"/>
<dbReference type="OrthoDB" id="1564555at2759"/>
<dbReference type="PAN-GO" id="Q15185">
    <property type="GO annotations" value="10 GO annotations based on evolutionary models"/>
</dbReference>
<dbReference type="PhylomeDB" id="Q15185"/>
<dbReference type="TreeFam" id="TF315077"/>
<dbReference type="BioCyc" id="MetaCyc:HS03359-MONOMER"/>
<dbReference type="PathwayCommons" id="Q15185"/>
<dbReference type="Reactome" id="R-HSA-2162123">
    <property type="pathway name" value="Synthesis of Prostaglandins (PG) and Thromboxanes (TX)"/>
</dbReference>
<dbReference type="Reactome" id="R-HSA-3371497">
    <property type="pathway name" value="HSP90 chaperone cycle for steroid hormone receptors (SHR) in the presence of ligand"/>
</dbReference>
<dbReference type="Reactome" id="R-HSA-3371511">
    <property type="pathway name" value="HSF1 activation"/>
</dbReference>
<dbReference type="Reactome" id="R-HSA-3371568">
    <property type="pathway name" value="Attenuation phase"/>
</dbReference>
<dbReference type="Reactome" id="R-HSA-8937144">
    <property type="pathway name" value="Aryl hydrocarbon receptor signalling"/>
</dbReference>
<dbReference type="Reactome" id="R-HSA-8939211">
    <property type="pathway name" value="ESR-mediated signaling"/>
</dbReference>
<dbReference type="Reactome" id="R-HSA-9018519">
    <property type="pathway name" value="Estrogen-dependent gene expression"/>
</dbReference>
<dbReference type="Reactome" id="R-HSA-9679191">
    <property type="pathway name" value="Potential therapeutics for SARS"/>
</dbReference>
<dbReference type="SABIO-RK" id="Q15185"/>
<dbReference type="SignaLink" id="Q15185"/>
<dbReference type="SIGNOR" id="Q15185"/>
<dbReference type="UniPathway" id="UPA00662"/>
<dbReference type="BioGRID-ORCS" id="10728">
    <property type="hits" value="41 hits in 1087 CRISPR screens"/>
</dbReference>
<dbReference type="CD-CODE" id="DEE660B4">
    <property type="entry name" value="Stress granule"/>
</dbReference>
<dbReference type="ChiTaRS" id="PTGES3">
    <property type="organism name" value="human"/>
</dbReference>
<dbReference type="EvolutionaryTrace" id="Q15185"/>
<dbReference type="GeneWiki" id="PTGES3"/>
<dbReference type="GenomeRNAi" id="10728"/>
<dbReference type="Pharos" id="Q15185">
    <property type="development level" value="Tbio"/>
</dbReference>
<dbReference type="PRO" id="PR:Q15185"/>
<dbReference type="Proteomes" id="UP000005640">
    <property type="component" value="Chromosome 12"/>
</dbReference>
<dbReference type="RNAct" id="Q15185">
    <property type="molecule type" value="protein"/>
</dbReference>
<dbReference type="Bgee" id="ENSG00000110958">
    <property type="expression patterns" value="Expressed in secondary oocyte and 222 other cell types or tissues"/>
</dbReference>
<dbReference type="ExpressionAtlas" id="Q15185">
    <property type="expression patterns" value="baseline and differential"/>
</dbReference>
<dbReference type="GO" id="GO:0000781">
    <property type="term" value="C:chromosome, telomeric region"/>
    <property type="evidence" value="ECO:0000305"/>
    <property type="project" value="UniProtKB"/>
</dbReference>
<dbReference type="GO" id="GO:0005829">
    <property type="term" value="C:cytosol"/>
    <property type="evidence" value="ECO:0000318"/>
    <property type="project" value="GO_Central"/>
</dbReference>
<dbReference type="GO" id="GO:0005654">
    <property type="term" value="C:nucleoplasm"/>
    <property type="evidence" value="ECO:0000304"/>
    <property type="project" value="Reactome"/>
</dbReference>
<dbReference type="GO" id="GO:0005634">
    <property type="term" value="C:nucleus"/>
    <property type="evidence" value="ECO:0007005"/>
    <property type="project" value="UniProtKB"/>
</dbReference>
<dbReference type="GO" id="GO:0101031">
    <property type="term" value="C:protein folding chaperone complex"/>
    <property type="evidence" value="ECO:0000314"/>
    <property type="project" value="UniProtKB"/>
</dbReference>
<dbReference type="GO" id="GO:0032991">
    <property type="term" value="C:protein-containing complex"/>
    <property type="evidence" value="ECO:0000315"/>
    <property type="project" value="CAFA"/>
</dbReference>
<dbReference type="GO" id="GO:0005697">
    <property type="term" value="C:telomerase holoenzyme complex"/>
    <property type="evidence" value="ECO:0000314"/>
    <property type="project" value="UniProtKB"/>
</dbReference>
<dbReference type="GO" id="GO:0070182">
    <property type="term" value="F:DNA polymerase binding"/>
    <property type="evidence" value="ECO:0000353"/>
    <property type="project" value="BHF-UCL"/>
</dbReference>
<dbReference type="GO" id="GO:0051879">
    <property type="term" value="F:Hsp90 protein binding"/>
    <property type="evidence" value="ECO:0000353"/>
    <property type="project" value="CAFA"/>
</dbReference>
<dbReference type="GO" id="GO:0050220">
    <property type="term" value="F:prostaglandin-E synthase activity"/>
    <property type="evidence" value="ECO:0000314"/>
    <property type="project" value="UniProtKB"/>
</dbReference>
<dbReference type="GO" id="GO:0051087">
    <property type="term" value="F:protein-folding chaperone binding"/>
    <property type="evidence" value="ECO:0000318"/>
    <property type="project" value="GO_Central"/>
</dbReference>
<dbReference type="GO" id="GO:0003720">
    <property type="term" value="F:telomerase activity"/>
    <property type="evidence" value="ECO:0000314"/>
    <property type="project" value="UniProtKB"/>
</dbReference>
<dbReference type="GO" id="GO:0051082">
    <property type="term" value="F:unfolded protein binding"/>
    <property type="evidence" value="ECO:0000314"/>
    <property type="project" value="UniProtKB"/>
</dbReference>
<dbReference type="GO" id="GO:0051085">
    <property type="term" value="P:chaperone cofactor-dependent protein refolding"/>
    <property type="evidence" value="ECO:0000314"/>
    <property type="project" value="UniProtKB"/>
</dbReference>
<dbReference type="GO" id="GO:0051131">
    <property type="term" value="P:chaperone-mediated protein complex assembly"/>
    <property type="evidence" value="ECO:0000315"/>
    <property type="project" value="CAFA"/>
</dbReference>
<dbReference type="GO" id="GO:0032212">
    <property type="term" value="P:positive regulation of telomere maintenance via telomerase"/>
    <property type="evidence" value="ECO:0000314"/>
    <property type="project" value="BHF-UCL"/>
</dbReference>
<dbReference type="GO" id="GO:0001516">
    <property type="term" value="P:prostaglandin biosynthetic process"/>
    <property type="evidence" value="ECO:0000314"/>
    <property type="project" value="UniProtKB"/>
</dbReference>
<dbReference type="GO" id="GO:0046457">
    <property type="term" value="P:prostanoid biosynthetic process"/>
    <property type="evidence" value="ECO:0000304"/>
    <property type="project" value="Reactome"/>
</dbReference>
<dbReference type="GO" id="GO:0006457">
    <property type="term" value="P:protein folding"/>
    <property type="evidence" value="ECO:0000318"/>
    <property type="project" value="GO_Central"/>
</dbReference>
<dbReference type="GO" id="GO:0050821">
    <property type="term" value="P:protein stabilization"/>
    <property type="evidence" value="ECO:0000315"/>
    <property type="project" value="CAFA"/>
</dbReference>
<dbReference type="GO" id="GO:0007165">
    <property type="term" value="P:signal transduction"/>
    <property type="evidence" value="ECO:0000304"/>
    <property type="project" value="ProtInc"/>
</dbReference>
<dbReference type="GO" id="GO:1905323">
    <property type="term" value="P:telomerase holoenzyme complex assembly"/>
    <property type="evidence" value="ECO:0000314"/>
    <property type="project" value="BHF-UCL"/>
</dbReference>
<dbReference type="GO" id="GO:0000723">
    <property type="term" value="P:telomere maintenance"/>
    <property type="evidence" value="ECO:0000304"/>
    <property type="project" value="UniProtKB"/>
</dbReference>
<dbReference type="GO" id="GO:0007004">
    <property type="term" value="P:telomere maintenance via telomerase"/>
    <property type="evidence" value="ECO:0000314"/>
    <property type="project" value="BHF-UCL"/>
</dbReference>
<dbReference type="CDD" id="cd00237">
    <property type="entry name" value="p23"/>
    <property type="match status" value="1"/>
</dbReference>
<dbReference type="DisProt" id="DP00358"/>
<dbReference type="FunFam" id="2.60.40.790:FF:000003">
    <property type="entry name" value="prostaglandin E synthase 3"/>
    <property type="match status" value="1"/>
</dbReference>
<dbReference type="Gene3D" id="2.60.40.790">
    <property type="match status" value="1"/>
</dbReference>
<dbReference type="InterPro" id="IPR007052">
    <property type="entry name" value="CS_dom"/>
</dbReference>
<dbReference type="InterPro" id="IPR008978">
    <property type="entry name" value="HSP20-like_chaperone"/>
</dbReference>
<dbReference type="InterPro" id="IPR045250">
    <property type="entry name" value="p23-like"/>
</dbReference>
<dbReference type="PANTHER" id="PTHR22932:SF3">
    <property type="entry name" value="PROSTAGLANDIN E SYNTHASE 3"/>
    <property type="match status" value="1"/>
</dbReference>
<dbReference type="PANTHER" id="PTHR22932">
    <property type="entry name" value="TELOMERASE-BINDING PROTEIN P23 HSP90 CO-CHAPERONE"/>
    <property type="match status" value="1"/>
</dbReference>
<dbReference type="Pfam" id="PF04969">
    <property type="entry name" value="CS"/>
    <property type="match status" value="1"/>
</dbReference>
<dbReference type="SUPFAM" id="SSF49764">
    <property type="entry name" value="HSP20-like chaperones"/>
    <property type="match status" value="1"/>
</dbReference>
<dbReference type="PROSITE" id="PS51203">
    <property type="entry name" value="CS"/>
    <property type="match status" value="1"/>
</dbReference>